<comment type="catalytic activity">
    <reaction evidence="1">
        <text>L-citrulline + L-aspartate + ATP = 2-(N(omega)-L-arginino)succinate + AMP + diphosphate + H(+)</text>
        <dbReference type="Rhea" id="RHEA:10932"/>
        <dbReference type="ChEBI" id="CHEBI:15378"/>
        <dbReference type="ChEBI" id="CHEBI:29991"/>
        <dbReference type="ChEBI" id="CHEBI:30616"/>
        <dbReference type="ChEBI" id="CHEBI:33019"/>
        <dbReference type="ChEBI" id="CHEBI:57472"/>
        <dbReference type="ChEBI" id="CHEBI:57743"/>
        <dbReference type="ChEBI" id="CHEBI:456215"/>
        <dbReference type="EC" id="6.3.4.5"/>
    </reaction>
</comment>
<comment type="pathway">
    <text evidence="1">Amino-acid biosynthesis; L-arginine biosynthesis; L-arginine from L-ornithine and carbamoyl phosphate: step 2/3.</text>
</comment>
<comment type="subunit">
    <text evidence="1">Homotetramer.</text>
</comment>
<comment type="subcellular location">
    <subcellularLocation>
        <location evidence="1">Cytoplasm</location>
    </subcellularLocation>
</comment>
<comment type="similarity">
    <text evidence="1">Belongs to the argininosuccinate synthase family. Type 2 subfamily.</text>
</comment>
<gene>
    <name evidence="1" type="primary">argG</name>
    <name type="ordered locus">HSM_0253</name>
</gene>
<organism>
    <name type="scientific">Histophilus somni (strain 2336)</name>
    <name type="common">Haemophilus somnus</name>
    <dbReference type="NCBI Taxonomy" id="228400"/>
    <lineage>
        <taxon>Bacteria</taxon>
        <taxon>Pseudomonadati</taxon>
        <taxon>Pseudomonadota</taxon>
        <taxon>Gammaproteobacteria</taxon>
        <taxon>Pasteurellales</taxon>
        <taxon>Pasteurellaceae</taxon>
        <taxon>Histophilus</taxon>
    </lineage>
</organism>
<dbReference type="EC" id="6.3.4.5" evidence="1"/>
<dbReference type="EMBL" id="CP000947">
    <property type="protein sequence ID" value="ACA31880.1"/>
    <property type="molecule type" value="Genomic_DNA"/>
</dbReference>
<dbReference type="RefSeq" id="WP_012341124.1">
    <property type="nucleotide sequence ID" value="NC_010519.1"/>
</dbReference>
<dbReference type="SMR" id="B0UW58"/>
<dbReference type="STRING" id="228400.HSM_0253"/>
<dbReference type="GeneID" id="31486533"/>
<dbReference type="KEGG" id="hsm:HSM_0253"/>
<dbReference type="HOGENOM" id="CLU_032784_4_1_6"/>
<dbReference type="UniPathway" id="UPA00068">
    <property type="reaction ID" value="UER00113"/>
</dbReference>
<dbReference type="GO" id="GO:0005737">
    <property type="term" value="C:cytoplasm"/>
    <property type="evidence" value="ECO:0007669"/>
    <property type="project" value="UniProtKB-SubCell"/>
</dbReference>
<dbReference type="GO" id="GO:0004055">
    <property type="term" value="F:argininosuccinate synthase activity"/>
    <property type="evidence" value="ECO:0007669"/>
    <property type="project" value="UniProtKB-UniRule"/>
</dbReference>
<dbReference type="GO" id="GO:0005524">
    <property type="term" value="F:ATP binding"/>
    <property type="evidence" value="ECO:0007669"/>
    <property type="project" value="UniProtKB-UniRule"/>
</dbReference>
<dbReference type="GO" id="GO:0042803">
    <property type="term" value="F:protein homodimerization activity"/>
    <property type="evidence" value="ECO:0007669"/>
    <property type="project" value="InterPro"/>
</dbReference>
<dbReference type="GO" id="GO:0000053">
    <property type="term" value="P:argininosuccinate metabolic process"/>
    <property type="evidence" value="ECO:0007669"/>
    <property type="project" value="TreeGrafter"/>
</dbReference>
<dbReference type="GO" id="GO:0006526">
    <property type="term" value="P:L-arginine biosynthetic process"/>
    <property type="evidence" value="ECO:0007669"/>
    <property type="project" value="UniProtKB-UniRule"/>
</dbReference>
<dbReference type="GO" id="GO:0000050">
    <property type="term" value="P:urea cycle"/>
    <property type="evidence" value="ECO:0007669"/>
    <property type="project" value="TreeGrafter"/>
</dbReference>
<dbReference type="CDD" id="cd01999">
    <property type="entry name" value="ASS"/>
    <property type="match status" value="1"/>
</dbReference>
<dbReference type="FunFam" id="1.10.287.400:FF:000001">
    <property type="entry name" value="Argininosuccinate synthase"/>
    <property type="match status" value="1"/>
</dbReference>
<dbReference type="Gene3D" id="1.10.287.400">
    <property type="match status" value="1"/>
</dbReference>
<dbReference type="Gene3D" id="3.90.1260.10">
    <property type="entry name" value="Argininosuccinate synthetase, chain A, domain 2"/>
    <property type="match status" value="1"/>
</dbReference>
<dbReference type="Gene3D" id="3.40.50.620">
    <property type="entry name" value="HUPs"/>
    <property type="match status" value="1"/>
</dbReference>
<dbReference type="HAMAP" id="MF_00581">
    <property type="entry name" value="Arg_succ_synth_type2"/>
    <property type="match status" value="1"/>
</dbReference>
<dbReference type="InterPro" id="IPR023437">
    <property type="entry name" value="Arg_succ_synth_type2_subfam"/>
</dbReference>
<dbReference type="InterPro" id="IPR048268">
    <property type="entry name" value="Arginosuc_syn_C"/>
</dbReference>
<dbReference type="InterPro" id="IPR048267">
    <property type="entry name" value="Arginosuc_syn_N"/>
</dbReference>
<dbReference type="InterPro" id="IPR001518">
    <property type="entry name" value="Arginosuc_synth"/>
</dbReference>
<dbReference type="InterPro" id="IPR018223">
    <property type="entry name" value="Arginosuc_synth_CS"/>
</dbReference>
<dbReference type="InterPro" id="IPR023434">
    <property type="entry name" value="Arginosuc_synth_type_1_subfam"/>
</dbReference>
<dbReference type="InterPro" id="IPR024074">
    <property type="entry name" value="AS_cat/multimer_dom_body"/>
</dbReference>
<dbReference type="InterPro" id="IPR024073">
    <property type="entry name" value="AS_multimer_C_tail"/>
</dbReference>
<dbReference type="InterPro" id="IPR014729">
    <property type="entry name" value="Rossmann-like_a/b/a_fold"/>
</dbReference>
<dbReference type="NCBIfam" id="TIGR00032">
    <property type="entry name" value="argG"/>
    <property type="match status" value="1"/>
</dbReference>
<dbReference type="NCBIfam" id="NF003779">
    <property type="entry name" value="PRK05370.1"/>
    <property type="match status" value="1"/>
</dbReference>
<dbReference type="PANTHER" id="PTHR11587">
    <property type="entry name" value="ARGININOSUCCINATE SYNTHASE"/>
    <property type="match status" value="1"/>
</dbReference>
<dbReference type="PANTHER" id="PTHR11587:SF2">
    <property type="entry name" value="ARGININOSUCCINATE SYNTHASE"/>
    <property type="match status" value="1"/>
</dbReference>
<dbReference type="Pfam" id="PF20979">
    <property type="entry name" value="Arginosuc_syn_C"/>
    <property type="match status" value="1"/>
</dbReference>
<dbReference type="Pfam" id="PF00764">
    <property type="entry name" value="Arginosuc_synth"/>
    <property type="match status" value="1"/>
</dbReference>
<dbReference type="SUPFAM" id="SSF52402">
    <property type="entry name" value="Adenine nucleotide alpha hydrolases-like"/>
    <property type="match status" value="1"/>
</dbReference>
<dbReference type="SUPFAM" id="SSF69864">
    <property type="entry name" value="Argininosuccinate synthetase, C-terminal domain"/>
    <property type="match status" value="1"/>
</dbReference>
<dbReference type="PROSITE" id="PS00564">
    <property type="entry name" value="ARGININOSUCCIN_SYN_1"/>
    <property type="match status" value="1"/>
</dbReference>
<dbReference type="PROSITE" id="PS00565">
    <property type="entry name" value="ARGININOSUCCIN_SYN_2"/>
    <property type="match status" value="1"/>
</dbReference>
<protein>
    <recommendedName>
        <fullName evidence="1">Argininosuccinate synthase</fullName>
        <ecNumber evidence="1">6.3.4.5</ecNumber>
    </recommendedName>
    <alternativeName>
        <fullName evidence="1">Citrulline--aspartate ligase</fullName>
    </alternativeName>
</protein>
<accession>B0UW58</accession>
<feature type="chain" id="PRO_1000082401" description="Argininosuccinate synthase">
    <location>
        <begin position="1"/>
        <end position="444"/>
    </location>
</feature>
<feature type="binding site" evidence="1">
    <location>
        <begin position="18"/>
        <end position="26"/>
    </location>
    <ligand>
        <name>ATP</name>
        <dbReference type="ChEBI" id="CHEBI:30616"/>
    </ligand>
</feature>
<feature type="binding site" evidence="1">
    <location>
        <position position="44"/>
    </location>
    <ligand>
        <name>ATP</name>
        <dbReference type="ChEBI" id="CHEBI:30616"/>
    </ligand>
</feature>
<feature type="binding site" evidence="1">
    <location>
        <position position="100"/>
    </location>
    <ligand>
        <name>L-citrulline</name>
        <dbReference type="ChEBI" id="CHEBI:57743"/>
    </ligand>
</feature>
<feature type="binding site" evidence="1">
    <location>
        <position position="130"/>
    </location>
    <ligand>
        <name>ATP</name>
        <dbReference type="ChEBI" id="CHEBI:30616"/>
    </ligand>
</feature>
<feature type="binding site" evidence="1">
    <location>
        <position position="132"/>
    </location>
    <ligand>
        <name>ATP</name>
        <dbReference type="ChEBI" id="CHEBI:30616"/>
    </ligand>
</feature>
<feature type="binding site" evidence="1">
    <location>
        <position position="132"/>
    </location>
    <ligand>
        <name>L-aspartate</name>
        <dbReference type="ChEBI" id="CHEBI:29991"/>
    </ligand>
</feature>
<feature type="binding site" evidence="1">
    <location>
        <position position="136"/>
    </location>
    <ligand>
        <name>L-aspartate</name>
        <dbReference type="ChEBI" id="CHEBI:29991"/>
    </ligand>
</feature>
<feature type="binding site" evidence="1">
    <location>
        <position position="136"/>
    </location>
    <ligand>
        <name>L-citrulline</name>
        <dbReference type="ChEBI" id="CHEBI:57743"/>
    </ligand>
</feature>
<feature type="binding site" evidence="1">
    <location>
        <position position="137"/>
    </location>
    <ligand>
        <name>ATP</name>
        <dbReference type="ChEBI" id="CHEBI:30616"/>
    </ligand>
</feature>
<feature type="binding site" evidence="1">
    <location>
        <position position="137"/>
    </location>
    <ligand>
        <name>L-aspartate</name>
        <dbReference type="ChEBI" id="CHEBI:29991"/>
    </ligand>
</feature>
<feature type="binding site" evidence="1">
    <location>
        <position position="140"/>
    </location>
    <ligand>
        <name>L-citrulline</name>
        <dbReference type="ChEBI" id="CHEBI:57743"/>
    </ligand>
</feature>
<feature type="binding site" evidence="1">
    <location>
        <position position="193"/>
    </location>
    <ligand>
        <name>L-citrulline</name>
        <dbReference type="ChEBI" id="CHEBI:57743"/>
    </ligand>
</feature>
<feature type="binding site" evidence="1">
    <location>
        <position position="195"/>
    </location>
    <ligand>
        <name>ATP</name>
        <dbReference type="ChEBI" id="CHEBI:30616"/>
    </ligand>
</feature>
<feature type="binding site" evidence="1">
    <location>
        <position position="202"/>
    </location>
    <ligand>
        <name>L-citrulline</name>
        <dbReference type="ChEBI" id="CHEBI:57743"/>
    </ligand>
</feature>
<feature type="binding site" evidence="1">
    <location>
        <position position="204"/>
    </location>
    <ligand>
        <name>L-citrulline</name>
        <dbReference type="ChEBI" id="CHEBI:57743"/>
    </ligand>
</feature>
<feature type="binding site" evidence="1">
    <location>
        <position position="281"/>
    </location>
    <ligand>
        <name>L-citrulline</name>
        <dbReference type="ChEBI" id="CHEBI:57743"/>
    </ligand>
</feature>
<evidence type="ECO:0000255" key="1">
    <source>
        <dbReference type="HAMAP-Rule" id="MF_00581"/>
    </source>
</evidence>
<proteinExistence type="inferred from homology"/>
<keyword id="KW-0028">Amino-acid biosynthesis</keyword>
<keyword id="KW-0055">Arginine biosynthesis</keyword>
<keyword id="KW-0067">ATP-binding</keyword>
<keyword id="KW-0963">Cytoplasm</keyword>
<keyword id="KW-0436">Ligase</keyword>
<keyword id="KW-0547">Nucleotide-binding</keyword>
<reference key="1">
    <citation type="submission" date="2008-02" db="EMBL/GenBank/DDBJ databases">
        <title>Complete sequence of Haemophilus somnus 2336.</title>
        <authorList>
            <consortium name="US DOE Joint Genome Institute"/>
            <person name="Siddaramappa S."/>
            <person name="Duncan A.J."/>
            <person name="Challacombe J.F."/>
            <person name="Rainey D."/>
            <person name="Gillaspy A.F."/>
            <person name="Carson M."/>
            <person name="Gipson J."/>
            <person name="Gipson M."/>
            <person name="Bruce D."/>
            <person name="Detter J.C."/>
            <person name="Han C.S."/>
            <person name="Land M."/>
            <person name="Tapia R."/>
            <person name="Thompson L.S."/>
            <person name="Orvis J."/>
            <person name="Zaitshik J."/>
            <person name="Barnes G."/>
            <person name="Brettin T.S."/>
            <person name="Dyer D.W."/>
            <person name="Inzana T.J."/>
        </authorList>
    </citation>
    <scope>NUCLEOTIDE SEQUENCE [LARGE SCALE GENOMIC DNA]</scope>
    <source>
        <strain>2336</strain>
    </source>
</reference>
<name>ASSY_HISS2</name>
<sequence>MSNTILQHLPIGQKVGIAFSGGLDTSAALLWMRQKGAVPYAYTANLGQPDEEDYNAIPRKAMEYGAEKARLIDCRNQLAHEGIAAIQCGAFHISTGGVTYFNTTPLGRAVTGTMLVSAMKEDDVNIWGDGSTFKGNDIERFYRYGLLTNPSLRIYKPWLDNQFIDELGGRQEMSEFLIANGFDYKMSAEKAYSTDSNMLGATHEAKDLEYLNSGIRIVKPIMGVAFWRDDVTVKAEEVTVGFEDGVPVTLNGQSFSSAVELFLEANRIGGRHGLGMSDQIENRIIEAKSRGIYEAPGMALLHIAYERLVTAIHNEDTIEQYRINGLRLGRLLYQGRWFDPQALMLRETAQRWVARAVTGEVTLELRRGNDYSILNTVSPNMTYHPERLSMEKVENAPFDPSDRIGQLTMRNLDITDTRDKLGIYTHTGLLTVGKDSMLPQLDKK</sequence>